<name>DPOD2_DROME</name>
<proteinExistence type="evidence at protein level"/>
<feature type="chain" id="PRO_0000096170" description="DNA polymerase delta subunit 2">
    <location>
        <begin position="1"/>
        <end position="431"/>
    </location>
</feature>
<feature type="sequence conflict" description="In Ref. 3; AAM29316." evidence="4" ref="3">
    <original>E</original>
    <variation>D</variation>
    <location>
        <position position="363"/>
    </location>
</feature>
<feature type="sequence conflict" description="In Ref. 3; AAM29316." evidence="4" ref="3">
    <original>E</original>
    <variation>D</variation>
    <location>
        <position position="393"/>
    </location>
</feature>
<feature type="sequence conflict" description="In Ref. 3; AAM29316." evidence="4" ref="3">
    <original>M</original>
    <variation>I</variation>
    <location>
        <position position="423"/>
    </location>
</feature>
<gene>
    <name evidence="5" type="primary">PolD2</name>
    <name evidence="4" type="synonym">DNApolD1</name>
    <name evidence="3" type="synonym">Pol31</name>
    <name evidence="5" type="ORF">CG12018</name>
</gene>
<organism>
    <name type="scientific">Drosophila melanogaster</name>
    <name type="common">Fruit fly</name>
    <dbReference type="NCBI Taxonomy" id="7227"/>
    <lineage>
        <taxon>Eukaryota</taxon>
        <taxon>Metazoa</taxon>
        <taxon>Ecdysozoa</taxon>
        <taxon>Arthropoda</taxon>
        <taxon>Hexapoda</taxon>
        <taxon>Insecta</taxon>
        <taxon>Pterygota</taxon>
        <taxon>Neoptera</taxon>
        <taxon>Endopterygota</taxon>
        <taxon>Diptera</taxon>
        <taxon>Brachycera</taxon>
        <taxon>Muscomorpha</taxon>
        <taxon>Ephydroidea</taxon>
        <taxon>Drosophilidae</taxon>
        <taxon>Drosophila</taxon>
        <taxon>Sophophora</taxon>
    </lineage>
</organism>
<comment type="function">
    <text evidence="1 2">Accessory component of both the DNA polymerase delta complex and possibly the DNA polymerase zeta complex (By similarity). As a component of the delta complex, participates in high fidelity genome replication, including lagging strand synthesis, DNA recombination and repair (By similarity). Appears to promote the function of the DNA pol-delta complex accessory subunit PolD3 in both embryonic and postembryonic somatic cells (PubMed:31100062).</text>
</comment>
<comment type="subunit">
    <text evidence="1 2">Component of both the DNA polymerase delta and DNA polymerase zeta complexes (By similarity). The DNA polymerase delta complex consisting of three subunits: the catalytic subunit PolD1 and two accessory subunits PolD2/Pol31 and PolD3/Pol32 (PubMed:31100062). Within the delta complex, interacts with both PolD1 and PolD3, and is able to interact with PolD1 in the absence of PolD3 (PubMed:31100062). Component of the DNA polymerase zeta complex consisting of four subunits: the catalytic subunit PolZ1 and three accessory subunits PolZ2/Rev7, PolD2/Pol31 and PolD3/Pol32 (By similarity).</text>
</comment>
<comment type="interaction">
    <interactant intactId="EBI-194173">
        <id>Q9W088</id>
    </interactant>
    <interactant intactId="EBI-89582">
        <id>Q9Y118</id>
        <label>PolD3</label>
    </interactant>
    <organismsDiffer>false</organismsDiffer>
    <experiments>3</experiments>
</comment>
<comment type="subcellular location">
    <subcellularLocation>
        <location evidence="2">Nucleus</location>
    </subcellularLocation>
    <subcellularLocation>
        <location evidence="2">Nucleus</location>
        <location evidence="2">Nucleoplasm</location>
    </subcellularLocation>
    <text evidence="2">In embryos, accumulates in the nucleus during interphase but disperses into the nucleoplasm at the onset of mitosis.</text>
</comment>
<comment type="tissue specificity">
    <text evidence="2">Expressed in ovaries and embryos (at the protein level).</text>
</comment>
<comment type="disruption phenotype">
    <text evidence="2">RNAi-mediated knockdown in postembryonic cells reduces the protein levels of the delta complex member PolD3.</text>
</comment>
<comment type="similarity">
    <text evidence="4">Belongs to the DNA polymerase delta/II small subunit family.</text>
</comment>
<reference key="1">
    <citation type="journal article" date="2000" name="Science">
        <title>The genome sequence of Drosophila melanogaster.</title>
        <authorList>
            <person name="Adams M.D."/>
            <person name="Celniker S.E."/>
            <person name="Holt R.A."/>
            <person name="Evans C.A."/>
            <person name="Gocayne J.D."/>
            <person name="Amanatides P.G."/>
            <person name="Scherer S.E."/>
            <person name="Li P.W."/>
            <person name="Hoskins R.A."/>
            <person name="Galle R.F."/>
            <person name="George R.A."/>
            <person name="Lewis S.E."/>
            <person name="Richards S."/>
            <person name="Ashburner M."/>
            <person name="Henderson S.N."/>
            <person name="Sutton G.G."/>
            <person name="Wortman J.R."/>
            <person name="Yandell M.D."/>
            <person name="Zhang Q."/>
            <person name="Chen L.X."/>
            <person name="Brandon R.C."/>
            <person name="Rogers Y.-H.C."/>
            <person name="Blazej R.G."/>
            <person name="Champe M."/>
            <person name="Pfeiffer B.D."/>
            <person name="Wan K.H."/>
            <person name="Doyle C."/>
            <person name="Baxter E.G."/>
            <person name="Helt G."/>
            <person name="Nelson C.R."/>
            <person name="Miklos G.L.G."/>
            <person name="Abril J.F."/>
            <person name="Agbayani A."/>
            <person name="An H.-J."/>
            <person name="Andrews-Pfannkoch C."/>
            <person name="Baldwin D."/>
            <person name="Ballew R.M."/>
            <person name="Basu A."/>
            <person name="Baxendale J."/>
            <person name="Bayraktaroglu L."/>
            <person name="Beasley E.M."/>
            <person name="Beeson K.Y."/>
            <person name="Benos P.V."/>
            <person name="Berman B.P."/>
            <person name="Bhandari D."/>
            <person name="Bolshakov S."/>
            <person name="Borkova D."/>
            <person name="Botchan M.R."/>
            <person name="Bouck J."/>
            <person name="Brokstein P."/>
            <person name="Brottier P."/>
            <person name="Burtis K.C."/>
            <person name="Busam D.A."/>
            <person name="Butler H."/>
            <person name="Cadieu E."/>
            <person name="Center A."/>
            <person name="Chandra I."/>
            <person name="Cherry J.M."/>
            <person name="Cawley S."/>
            <person name="Dahlke C."/>
            <person name="Davenport L.B."/>
            <person name="Davies P."/>
            <person name="de Pablos B."/>
            <person name="Delcher A."/>
            <person name="Deng Z."/>
            <person name="Mays A.D."/>
            <person name="Dew I."/>
            <person name="Dietz S.M."/>
            <person name="Dodson K."/>
            <person name="Doup L.E."/>
            <person name="Downes M."/>
            <person name="Dugan-Rocha S."/>
            <person name="Dunkov B.C."/>
            <person name="Dunn P."/>
            <person name="Durbin K.J."/>
            <person name="Evangelista C.C."/>
            <person name="Ferraz C."/>
            <person name="Ferriera S."/>
            <person name="Fleischmann W."/>
            <person name="Fosler C."/>
            <person name="Gabrielian A.E."/>
            <person name="Garg N.S."/>
            <person name="Gelbart W.M."/>
            <person name="Glasser K."/>
            <person name="Glodek A."/>
            <person name="Gong F."/>
            <person name="Gorrell J.H."/>
            <person name="Gu Z."/>
            <person name="Guan P."/>
            <person name="Harris M."/>
            <person name="Harris N.L."/>
            <person name="Harvey D.A."/>
            <person name="Heiman T.J."/>
            <person name="Hernandez J.R."/>
            <person name="Houck J."/>
            <person name="Hostin D."/>
            <person name="Houston K.A."/>
            <person name="Howland T.J."/>
            <person name="Wei M.-H."/>
            <person name="Ibegwam C."/>
            <person name="Jalali M."/>
            <person name="Kalush F."/>
            <person name="Karpen G.H."/>
            <person name="Ke Z."/>
            <person name="Kennison J.A."/>
            <person name="Ketchum K.A."/>
            <person name="Kimmel B.E."/>
            <person name="Kodira C.D."/>
            <person name="Kraft C.L."/>
            <person name="Kravitz S."/>
            <person name="Kulp D."/>
            <person name="Lai Z."/>
            <person name="Lasko P."/>
            <person name="Lei Y."/>
            <person name="Levitsky A.A."/>
            <person name="Li J.H."/>
            <person name="Li Z."/>
            <person name="Liang Y."/>
            <person name="Lin X."/>
            <person name="Liu X."/>
            <person name="Mattei B."/>
            <person name="McIntosh T.C."/>
            <person name="McLeod M.P."/>
            <person name="McPherson D."/>
            <person name="Merkulov G."/>
            <person name="Milshina N.V."/>
            <person name="Mobarry C."/>
            <person name="Morris J."/>
            <person name="Moshrefi A."/>
            <person name="Mount S.M."/>
            <person name="Moy M."/>
            <person name="Murphy B."/>
            <person name="Murphy L."/>
            <person name="Muzny D.M."/>
            <person name="Nelson D.L."/>
            <person name="Nelson D.R."/>
            <person name="Nelson K.A."/>
            <person name="Nixon K."/>
            <person name="Nusskern D.R."/>
            <person name="Pacleb J.M."/>
            <person name="Palazzolo M."/>
            <person name="Pittman G.S."/>
            <person name="Pan S."/>
            <person name="Pollard J."/>
            <person name="Puri V."/>
            <person name="Reese M.G."/>
            <person name="Reinert K."/>
            <person name="Remington K."/>
            <person name="Saunders R.D.C."/>
            <person name="Scheeler F."/>
            <person name="Shen H."/>
            <person name="Shue B.C."/>
            <person name="Siden-Kiamos I."/>
            <person name="Simpson M."/>
            <person name="Skupski M.P."/>
            <person name="Smith T.J."/>
            <person name="Spier E."/>
            <person name="Spradling A.C."/>
            <person name="Stapleton M."/>
            <person name="Strong R."/>
            <person name="Sun E."/>
            <person name="Svirskas R."/>
            <person name="Tector C."/>
            <person name="Turner R."/>
            <person name="Venter E."/>
            <person name="Wang A.H."/>
            <person name="Wang X."/>
            <person name="Wang Z.-Y."/>
            <person name="Wassarman D.A."/>
            <person name="Weinstock G.M."/>
            <person name="Weissenbach J."/>
            <person name="Williams S.M."/>
            <person name="Woodage T."/>
            <person name="Worley K.C."/>
            <person name="Wu D."/>
            <person name="Yang S."/>
            <person name="Yao Q.A."/>
            <person name="Ye J."/>
            <person name="Yeh R.-F."/>
            <person name="Zaveri J.S."/>
            <person name="Zhan M."/>
            <person name="Zhang G."/>
            <person name="Zhao Q."/>
            <person name="Zheng L."/>
            <person name="Zheng X.H."/>
            <person name="Zhong F.N."/>
            <person name="Zhong W."/>
            <person name="Zhou X."/>
            <person name="Zhu S.C."/>
            <person name="Zhu X."/>
            <person name="Smith H.O."/>
            <person name="Gibbs R.A."/>
            <person name="Myers E.W."/>
            <person name="Rubin G.M."/>
            <person name="Venter J.C."/>
        </authorList>
    </citation>
    <scope>NUCLEOTIDE SEQUENCE [LARGE SCALE GENOMIC DNA]</scope>
    <source>
        <strain>Berkeley</strain>
    </source>
</reference>
<reference key="2">
    <citation type="journal article" date="2002" name="Genome Biol.">
        <title>Annotation of the Drosophila melanogaster euchromatic genome: a systematic review.</title>
        <authorList>
            <person name="Misra S."/>
            <person name="Crosby M.A."/>
            <person name="Mungall C.J."/>
            <person name="Matthews B.B."/>
            <person name="Campbell K.S."/>
            <person name="Hradecky P."/>
            <person name="Huang Y."/>
            <person name="Kaminker J.S."/>
            <person name="Millburn G.H."/>
            <person name="Prochnik S.E."/>
            <person name="Smith C.D."/>
            <person name="Tupy J.L."/>
            <person name="Whitfield E.J."/>
            <person name="Bayraktaroglu L."/>
            <person name="Berman B.P."/>
            <person name="Bettencourt B.R."/>
            <person name="Celniker S.E."/>
            <person name="de Grey A.D.N.J."/>
            <person name="Drysdale R.A."/>
            <person name="Harris N.L."/>
            <person name="Richter J."/>
            <person name="Russo S."/>
            <person name="Schroeder A.J."/>
            <person name="Shu S.Q."/>
            <person name="Stapleton M."/>
            <person name="Yamada C."/>
            <person name="Ashburner M."/>
            <person name="Gelbart W.M."/>
            <person name="Rubin G.M."/>
            <person name="Lewis S.E."/>
        </authorList>
    </citation>
    <scope>GENOME REANNOTATION</scope>
    <source>
        <strain>Berkeley</strain>
    </source>
</reference>
<reference key="3">
    <citation type="journal article" date="2002" name="Genome Biol.">
        <title>A Drosophila full-length cDNA resource.</title>
        <authorList>
            <person name="Stapleton M."/>
            <person name="Carlson J.W."/>
            <person name="Brokstein P."/>
            <person name="Yu C."/>
            <person name="Champe M."/>
            <person name="George R.A."/>
            <person name="Guarin H."/>
            <person name="Kronmiller B."/>
            <person name="Pacleb J.M."/>
            <person name="Park S."/>
            <person name="Wan K.H."/>
            <person name="Rubin G.M."/>
            <person name="Celniker S.E."/>
        </authorList>
    </citation>
    <scope>NUCLEOTIDE SEQUENCE [LARGE SCALE MRNA]</scope>
    <source>
        <strain>Berkeley</strain>
        <tissue>Head</tissue>
        <tissue>Testis</tissue>
    </source>
</reference>
<reference key="4">
    <citation type="submission" date="2013-09" db="EMBL/GenBank/DDBJ databases">
        <authorList>
            <person name="Carlson J."/>
            <person name="Booth B."/>
            <person name="Frise E."/>
            <person name="Park S."/>
            <person name="Wan K."/>
            <person name="Yu C."/>
            <person name="Celniker S."/>
        </authorList>
    </citation>
    <scope>NUCLEOTIDE SEQUENCE [LARGE SCALE MRNA]</scope>
</reference>
<reference key="5">
    <citation type="journal article" date="2019" name="PLoS Genet.">
        <title>The processivity factor Pol32 mediates nuclear localization of DNA polymerase delta and prevents chromosomal fragile site formation in Drosophila development.</title>
        <authorList>
            <person name="Ji J."/>
            <person name="Tang X."/>
            <person name="Hu W."/>
            <person name="Maggert K.A."/>
            <person name="Rong Y.S."/>
        </authorList>
    </citation>
    <scope>FUNCTION</scope>
    <scope>IDENTIFICATION IN THE DNA POLYMERASE DELTA COMPLEX</scope>
    <scope>SUBCELLULAR LOCATION</scope>
    <scope>TISSUE SPECIFICITY</scope>
    <scope>DISRUPTION PHENOTYPE</scope>
</reference>
<keyword id="KW-0235">DNA replication</keyword>
<keyword id="KW-0539">Nucleus</keyword>
<keyword id="KW-1185">Reference proteome</keyword>
<dbReference type="EMBL" id="AE014296">
    <property type="protein sequence ID" value="AAF47566.1"/>
    <property type="molecule type" value="Genomic_DNA"/>
</dbReference>
<dbReference type="EMBL" id="AF160903">
    <property type="protein sequence ID" value="AAD46843.2"/>
    <property type="molecule type" value="mRNA"/>
</dbReference>
<dbReference type="EMBL" id="AY113311">
    <property type="protein sequence ID" value="AAM29316.1"/>
    <property type="molecule type" value="mRNA"/>
</dbReference>
<dbReference type="EMBL" id="BT150296">
    <property type="protein sequence ID" value="AGW24078.1"/>
    <property type="molecule type" value="mRNA"/>
</dbReference>
<dbReference type="RefSeq" id="NP_647659.1">
    <property type="nucleotide sequence ID" value="NM_139402.3"/>
</dbReference>
<dbReference type="SMR" id="Q9W088"/>
<dbReference type="BioGRID" id="63760">
    <property type="interactions" value="5"/>
</dbReference>
<dbReference type="ComplexPortal" id="CPX-2421">
    <property type="entry name" value="DNA polymerase delta complex"/>
</dbReference>
<dbReference type="ComplexPortal" id="CPX-2426">
    <property type="entry name" value="DNA polymerase zeta complex"/>
</dbReference>
<dbReference type="DIP" id="DIP-20333N"/>
<dbReference type="FunCoup" id="Q9W088">
    <property type="interactions" value="1010"/>
</dbReference>
<dbReference type="IntAct" id="Q9W088">
    <property type="interactions" value="4"/>
</dbReference>
<dbReference type="STRING" id="7227.FBpp0072658"/>
<dbReference type="PaxDb" id="7227-FBpp0072658"/>
<dbReference type="EnsemblMetazoa" id="FBtr0072775">
    <property type="protein sequence ID" value="FBpp0072658"/>
    <property type="gene ID" value="FBgn0027903"/>
</dbReference>
<dbReference type="GeneID" id="38228"/>
<dbReference type="KEGG" id="dme:Dmel_CG12018"/>
<dbReference type="UCSC" id="CG12018-RA">
    <property type="organism name" value="d. melanogaster"/>
</dbReference>
<dbReference type="AGR" id="FB:FBgn0027903"/>
<dbReference type="CTD" id="5425"/>
<dbReference type="FlyBase" id="FBgn0027903">
    <property type="gene designation" value="PolD2"/>
</dbReference>
<dbReference type="VEuPathDB" id="VectorBase:FBgn0027903"/>
<dbReference type="eggNOG" id="KOG2732">
    <property type="taxonomic scope" value="Eukaryota"/>
</dbReference>
<dbReference type="GeneTree" id="ENSGT00390000006780"/>
<dbReference type="HOGENOM" id="CLU_021763_0_0_1"/>
<dbReference type="InParanoid" id="Q9W088"/>
<dbReference type="OMA" id="HCILIGT"/>
<dbReference type="OrthoDB" id="3763at2759"/>
<dbReference type="PhylomeDB" id="Q9W088"/>
<dbReference type="Reactome" id="R-DME-69166">
    <property type="pathway name" value="Removal of the Flap Intermediate"/>
</dbReference>
<dbReference type="Reactome" id="R-DME-69183">
    <property type="pathway name" value="Processive synthesis on the lagging strand"/>
</dbReference>
<dbReference type="BioGRID-ORCS" id="38228">
    <property type="hits" value="0 hits in 1 CRISPR screen"/>
</dbReference>
<dbReference type="GenomeRNAi" id="38228"/>
<dbReference type="PRO" id="PR:Q9W088"/>
<dbReference type="Proteomes" id="UP000000803">
    <property type="component" value="Chromosome 3L"/>
</dbReference>
<dbReference type="Bgee" id="FBgn0027903">
    <property type="expression patterns" value="Expressed in secondary oocyte and 38 other cell types or tissues"/>
</dbReference>
<dbReference type="GO" id="GO:0043625">
    <property type="term" value="C:delta DNA polymerase complex"/>
    <property type="evidence" value="ECO:0000314"/>
    <property type="project" value="FlyBase"/>
</dbReference>
<dbReference type="GO" id="GO:0005654">
    <property type="term" value="C:nucleoplasm"/>
    <property type="evidence" value="ECO:0000314"/>
    <property type="project" value="UniProtKB"/>
</dbReference>
<dbReference type="GO" id="GO:0005634">
    <property type="term" value="C:nucleus"/>
    <property type="evidence" value="ECO:0000314"/>
    <property type="project" value="FlyBase"/>
</dbReference>
<dbReference type="GO" id="GO:0016035">
    <property type="term" value="C:zeta DNA polymerase complex"/>
    <property type="evidence" value="ECO:0000250"/>
    <property type="project" value="FlyBase"/>
</dbReference>
<dbReference type="GO" id="GO:0003677">
    <property type="term" value="F:DNA binding"/>
    <property type="evidence" value="ECO:0007669"/>
    <property type="project" value="InterPro"/>
</dbReference>
<dbReference type="GO" id="GO:0006271">
    <property type="term" value="P:DNA strand elongation involved in DNA replication"/>
    <property type="evidence" value="ECO:0000318"/>
    <property type="project" value="GO_Central"/>
</dbReference>
<dbReference type="GO" id="GO:1990506">
    <property type="term" value="P:mitotic DNA-templated DNA replication"/>
    <property type="evidence" value="ECO:0000315"/>
    <property type="project" value="FlyBase"/>
</dbReference>
<dbReference type="CDD" id="cd07387">
    <property type="entry name" value="MPP_PolD2_C"/>
    <property type="match status" value="1"/>
</dbReference>
<dbReference type="FunFam" id="3.60.21.50:FF:000002">
    <property type="entry name" value="DNA polymerase delta small subunit"/>
    <property type="match status" value="1"/>
</dbReference>
<dbReference type="FunFam" id="2.40.50.430:FF:000001">
    <property type="entry name" value="DNA polymerase delta subunit 2"/>
    <property type="match status" value="1"/>
</dbReference>
<dbReference type="Gene3D" id="2.40.50.430">
    <property type="match status" value="1"/>
</dbReference>
<dbReference type="Gene3D" id="3.60.21.50">
    <property type="match status" value="1"/>
</dbReference>
<dbReference type="InterPro" id="IPR007185">
    <property type="entry name" value="DNA_pol_a/d/e_bsu"/>
</dbReference>
<dbReference type="InterPro" id="IPR040663">
    <property type="entry name" value="DNA_pol_D_N"/>
</dbReference>
<dbReference type="InterPro" id="IPR024826">
    <property type="entry name" value="DNA_pol_delta/II_ssu"/>
</dbReference>
<dbReference type="InterPro" id="IPR041863">
    <property type="entry name" value="PolD2_C"/>
</dbReference>
<dbReference type="PANTHER" id="PTHR10416">
    <property type="entry name" value="DNA POLYMERASE DELTA SUBUNIT 2"/>
    <property type="match status" value="1"/>
</dbReference>
<dbReference type="PANTHER" id="PTHR10416:SF0">
    <property type="entry name" value="DNA POLYMERASE DELTA SUBUNIT 2"/>
    <property type="match status" value="1"/>
</dbReference>
<dbReference type="Pfam" id="PF18018">
    <property type="entry name" value="DNA_pol_D_N"/>
    <property type="match status" value="1"/>
</dbReference>
<dbReference type="Pfam" id="PF04042">
    <property type="entry name" value="DNA_pol_E_B"/>
    <property type="match status" value="1"/>
</dbReference>
<evidence type="ECO:0000250" key="1">
    <source>
        <dbReference type="UniProtKB" id="P49005"/>
    </source>
</evidence>
<evidence type="ECO:0000269" key="2">
    <source>
    </source>
</evidence>
<evidence type="ECO:0000303" key="3">
    <source>
    </source>
</evidence>
<evidence type="ECO:0000305" key="4"/>
<evidence type="ECO:0000312" key="5">
    <source>
        <dbReference type="FlyBase" id="FBgn0027903"/>
    </source>
</evidence>
<accession>Q9W088</accession>
<accession>Q8MZ80</accession>
<accession>Q9U9Q3</accession>
<accession>T2GGB6</accession>
<sequence>MTNRLETKYENLSSIFRLKGHDYQKQFFHLYAHRLAEMTRLLTPLAQKKWGNKEPIKKLCELRGEQDVHCILIGTIFKHQAHKPSILRDISEENQLAPQPPRQNYSDPEDKIVLEDELQRVRLQGKLNGQLLATGVVCAALGGTDSDGFFNVEDILFYESGPQKPLAPIKRSRLLVLASGLDQLQAHKFVEALNLFQYWLAGSLGNNKEAGSMVRLIVAGNSVRASAMAHVPTLQVARTQANANDTVQAVSQLDQWFASWARSLPVDIMPGPYDPANFMLPQQPFHKCMFPQAAQLATFQAVTNPYSCRLDEALVVGTSGQNVSDLLRSTSLDSALEALRCTLTWGHVAPTAPDTLACYPYIESDPFILRECPHVYYAGNCESFATELHEGSEGKRTRLVCVPSFSKTQSVAVVDLDTLDCRMVNFSVDAE</sequence>
<protein>
    <recommendedName>
        <fullName evidence="5">DNA polymerase delta subunit 2</fullName>
    </recommendedName>
    <alternativeName>
        <fullName evidence="3">Pol31 polymerase delta subunit</fullName>
    </alternativeName>
</protein>